<gene>
    <name type="ordered locus">Pret-008</name>
</gene>
<protein>
    <recommendedName>
        <fullName>Protein MGF 110-1L</fullName>
    </recommendedName>
</protein>
<reference key="1">
    <citation type="submission" date="2003-03" db="EMBL/GenBank/DDBJ databases">
        <title>African swine fever virus genomes.</title>
        <authorList>
            <person name="Kutish G.F."/>
            <person name="Rock D.L."/>
        </authorList>
    </citation>
    <scope>NUCLEOTIDE SEQUENCE [LARGE SCALE GENOMIC DNA]</scope>
</reference>
<organism>
    <name type="scientific">African swine fever virus (isolate Tick/South Africa/Pretoriuskop Pr4/1996)</name>
    <name type="common">ASFV</name>
    <dbReference type="NCBI Taxonomy" id="561443"/>
    <lineage>
        <taxon>Viruses</taxon>
        <taxon>Varidnaviria</taxon>
        <taxon>Bamfordvirae</taxon>
        <taxon>Nucleocytoviricota</taxon>
        <taxon>Pokkesviricetes</taxon>
        <taxon>Asfuvirales</taxon>
        <taxon>Asfarviridae</taxon>
        <taxon>Asfivirus</taxon>
        <taxon>African swine fever virus</taxon>
    </lineage>
</organism>
<evidence type="ECO:0000250" key="1"/>
<evidence type="ECO:0000255" key="2"/>
<evidence type="ECO:0000305" key="3"/>
<sequence>MLGLQIFTLLSIPTLLYTYELELLDLTRTPPEKELEYWCTYANHCRFCWDCQDGICKNKVFENHSPILENDYIANCSVFRRNEFCTYYVTSIKPHEVYRTECPQQSHEWHEAVIRKWQKLLTYGFYLVGCVLVANYVRKRSLQTVMYLLVLLVIFFLLSQLMLYRELEDKKHKIGSIPPKRELEHWCTHGKYCDFCWDCQNGICRNKVFKNHPPIGENDFIRHDCWTIHLPNRCYYQKIYKYPDYHMMECSQPTPYKWYDNLMKKQDMM</sequence>
<accession>P0C9G4</accession>
<dbReference type="EMBL" id="AY261363">
    <property type="status" value="NOT_ANNOTATED_CDS"/>
    <property type="molecule type" value="Genomic_DNA"/>
</dbReference>
<dbReference type="Proteomes" id="UP000000859">
    <property type="component" value="Segment"/>
</dbReference>
<dbReference type="GO" id="GO:0033644">
    <property type="term" value="C:host cell membrane"/>
    <property type="evidence" value="ECO:0007669"/>
    <property type="project" value="UniProtKB-SubCell"/>
</dbReference>
<dbReference type="GO" id="GO:0016020">
    <property type="term" value="C:membrane"/>
    <property type="evidence" value="ECO:0007669"/>
    <property type="project" value="UniProtKB-KW"/>
</dbReference>
<dbReference type="InterPro" id="IPR004848">
    <property type="entry name" value="ASFV_fam_110"/>
</dbReference>
<dbReference type="Pfam" id="PF01639">
    <property type="entry name" value="v110"/>
    <property type="match status" value="2"/>
</dbReference>
<organismHost>
    <name type="scientific">Ornithodoros</name>
    <name type="common">relapsing fever ticks</name>
    <dbReference type="NCBI Taxonomy" id="6937"/>
</organismHost>
<organismHost>
    <name type="scientific">Phacochoerus aethiopicus</name>
    <name type="common">Warthog</name>
    <dbReference type="NCBI Taxonomy" id="85517"/>
</organismHost>
<organismHost>
    <name type="scientific">Phacochoerus africanus</name>
    <name type="common">Warthog</name>
    <dbReference type="NCBI Taxonomy" id="41426"/>
</organismHost>
<organismHost>
    <name type="scientific">Potamochoerus larvatus</name>
    <name type="common">Bushpig</name>
    <dbReference type="NCBI Taxonomy" id="273792"/>
</organismHost>
<organismHost>
    <name type="scientific">Sus scrofa</name>
    <name type="common">Pig</name>
    <dbReference type="NCBI Taxonomy" id="9823"/>
</organismHost>
<keyword id="KW-0244">Early protein</keyword>
<keyword id="KW-0325">Glycoprotein</keyword>
<keyword id="KW-1043">Host membrane</keyword>
<keyword id="KW-0472">Membrane</keyword>
<keyword id="KW-0677">Repeat</keyword>
<keyword id="KW-0812">Transmembrane</keyword>
<keyword id="KW-1133">Transmembrane helix</keyword>
<feature type="chain" id="PRO_0000373186" description="Protein MGF 110-1L">
    <location>
        <begin position="1"/>
        <end position="269"/>
    </location>
</feature>
<feature type="topological domain" description="Cytoplasmic" evidence="2">
    <location>
        <position position="1"/>
    </location>
</feature>
<feature type="transmembrane region" description="Helical" evidence="2">
    <location>
        <begin position="2"/>
        <end position="18"/>
    </location>
</feature>
<feature type="topological domain" description="Extracellular" evidence="2">
    <location>
        <begin position="19"/>
        <end position="116"/>
    </location>
</feature>
<feature type="transmembrane region" description="Helical" evidence="2">
    <location>
        <begin position="117"/>
        <end position="137"/>
    </location>
</feature>
<feature type="topological domain" description="Cytoplasmic" evidence="2">
    <location>
        <begin position="138"/>
        <end position="144"/>
    </location>
</feature>
<feature type="transmembrane region" description="Helical" evidence="2">
    <location>
        <begin position="145"/>
        <end position="165"/>
    </location>
</feature>
<feature type="topological domain" description="Extracellular" evidence="2">
    <location>
        <begin position="166"/>
        <end position="269"/>
    </location>
</feature>
<feature type="repeat" description="A">
    <location>
        <begin position="1"/>
        <end position="145"/>
    </location>
</feature>
<feature type="repeat" description="B">
    <location>
        <begin position="147"/>
        <end position="269"/>
    </location>
</feature>
<feature type="glycosylation site" description="N-linked (GlcNAc...) asparagine; by host" evidence="2">
    <location>
        <position position="75"/>
    </location>
</feature>
<comment type="function">
    <text evidence="1">Plays a role in virus cell tropism, and may be required for efficient virus replication in macrophages.</text>
</comment>
<comment type="subcellular location">
    <subcellularLocation>
        <location evidence="3">Host membrane</location>
        <topology evidence="3">Multi-pass membrane protein</topology>
    </subcellularLocation>
</comment>
<comment type="induction">
    <text evidence="3">Expressed in the immediate early phase of the viral replicative cycle.</text>
</comment>
<comment type="similarity">
    <text evidence="3">Belongs to the asfivirus MGF 110 family.</text>
</comment>
<name>1101L_ASFP4</name>
<proteinExistence type="inferred from homology"/>